<organism>
    <name type="scientific">Xenopus tropicalis</name>
    <name type="common">Western clawed frog</name>
    <name type="synonym">Silurana tropicalis</name>
    <dbReference type="NCBI Taxonomy" id="8364"/>
    <lineage>
        <taxon>Eukaryota</taxon>
        <taxon>Metazoa</taxon>
        <taxon>Chordata</taxon>
        <taxon>Craniata</taxon>
        <taxon>Vertebrata</taxon>
        <taxon>Euteleostomi</taxon>
        <taxon>Amphibia</taxon>
        <taxon>Batrachia</taxon>
        <taxon>Anura</taxon>
        <taxon>Pipoidea</taxon>
        <taxon>Pipidae</taxon>
        <taxon>Xenopodinae</taxon>
        <taxon>Xenopus</taxon>
        <taxon>Silurana</taxon>
    </lineage>
</organism>
<feature type="initiator methionine" description="Removed" evidence="4">
    <location>
        <position position="1"/>
    </location>
</feature>
<feature type="chain" id="PRO_0000253953" description="Histone H3.2">
    <location>
        <begin position="2"/>
        <end position="136"/>
    </location>
</feature>
<feature type="region of interest" description="Disordered" evidence="9">
    <location>
        <begin position="1"/>
        <end position="43"/>
    </location>
</feature>
<feature type="modified residue" description="Asymmetric dimethylarginine; by PRMT6; alternate" evidence="8">
    <location>
        <position position="3"/>
    </location>
</feature>
<feature type="modified residue" description="Citrulline; alternate" evidence="8">
    <location>
        <position position="3"/>
    </location>
</feature>
<feature type="modified residue" description="Phosphothreonine; by HASPIN and VRK1" evidence="8">
    <location>
        <position position="4"/>
    </location>
</feature>
<feature type="modified residue" description="Allysine; alternate" evidence="8">
    <location>
        <position position="5"/>
    </location>
</feature>
<feature type="modified residue" description="N6,N6,N6-trimethyllysine; alternate" evidence="8">
    <location>
        <position position="5"/>
    </location>
</feature>
<feature type="modified residue" description="N6,N6-dimethyllysine; alternate" evidence="8">
    <location>
        <position position="5"/>
    </location>
</feature>
<feature type="modified residue" description="N6-(2-hydroxyisobutyryl)lysine; alternate" evidence="2">
    <location>
        <position position="5"/>
    </location>
</feature>
<feature type="modified residue" description="N6-acetyllysine; alternate" evidence="8">
    <location>
        <position position="5"/>
    </location>
</feature>
<feature type="modified residue" description="N6-crotonyllysine; alternate" evidence="8">
    <location>
        <position position="5"/>
    </location>
</feature>
<feature type="modified residue" description="N6-methyllysine; alternate" evidence="8">
    <location>
        <position position="5"/>
    </location>
</feature>
<feature type="modified residue" description="5-glutamyl dopamine; alternate" evidence="8">
    <location>
        <position position="6"/>
    </location>
</feature>
<feature type="modified residue" description="5-glutamyl serotonin; alternate" evidence="8">
    <location>
        <position position="6"/>
    </location>
</feature>
<feature type="modified residue" description="Phosphothreonine; by PKC" evidence="8">
    <location>
        <position position="7"/>
    </location>
</feature>
<feature type="modified residue" description="Citrulline; alternate" evidence="8">
    <location>
        <position position="9"/>
    </location>
</feature>
<feature type="modified residue" description="Symmetric dimethylarginine; by PRMT5; alternate" evidence="1">
    <location>
        <position position="9"/>
    </location>
</feature>
<feature type="modified residue" description="N6,N6,N6-trimethyllysine; alternate" evidence="8">
    <location>
        <position position="10"/>
    </location>
</feature>
<feature type="modified residue" description="N6,N6-dimethyllysine; alternate" evidence="8">
    <location>
        <position position="10"/>
    </location>
</feature>
<feature type="modified residue" description="N6-(2-hydroxyisobutyryl)lysine; alternate" evidence="2">
    <location>
        <position position="10"/>
    </location>
</feature>
<feature type="modified residue" description="N6-acetyllysine; alternate" evidence="8">
    <location>
        <position position="10"/>
    </location>
</feature>
<feature type="modified residue" description="N6-crotonyllysine; alternate" evidence="8">
    <location>
        <position position="10"/>
    </location>
</feature>
<feature type="modified residue" description="N6-lactoyllysine; alternate" evidence="8">
    <location>
        <position position="10"/>
    </location>
</feature>
<feature type="modified residue" description="N6-methyllysine; alternate" evidence="8">
    <location>
        <position position="10"/>
    </location>
</feature>
<feature type="modified residue" description="ADP-ribosylserine; alternate" evidence="2">
    <location>
        <position position="11"/>
    </location>
</feature>
<feature type="modified residue" description="Phosphoserine; alternate; by AURKB, AURKC, RPS6KA3, RPS6KA4 and RPS6KA5" evidence="8">
    <location>
        <position position="11"/>
    </location>
</feature>
<feature type="modified residue" description="Phosphothreonine; by PKC" evidence="8">
    <location>
        <position position="12"/>
    </location>
</feature>
<feature type="modified residue" description="N6-(2-hydroxyisobutyryl)lysine; alternate" evidence="2">
    <location>
        <position position="15"/>
    </location>
</feature>
<feature type="modified residue" description="N6-acetyllysine" evidence="8">
    <location>
        <position position="15"/>
    </location>
</feature>
<feature type="modified residue" description="N6-glutaryllysine; alternate" evidence="8">
    <location>
        <position position="15"/>
    </location>
</feature>
<feature type="modified residue" description="N6-lactoyllysine; alternate" evidence="5">
    <location>
        <position position="15"/>
    </location>
</feature>
<feature type="modified residue" description="Asymmetric dimethylarginine; by CARM1; alternate" evidence="8">
    <location>
        <position position="18"/>
    </location>
</feature>
<feature type="modified residue" description="Citrulline; alternate" evidence="8">
    <location>
        <position position="18"/>
    </location>
</feature>
<feature type="modified residue" description="N6-(2-hydroxyisobutyryl)lysine; alternate" evidence="2">
    <location>
        <position position="19"/>
    </location>
</feature>
<feature type="modified residue" description="N6-acetyllysine; alternate" evidence="8">
    <location>
        <position position="19"/>
    </location>
</feature>
<feature type="modified residue" description="N6-butyryllysine; alternate" evidence="3">
    <location>
        <position position="19"/>
    </location>
</feature>
<feature type="modified residue" description="N6-crotonyllysine; alternate" evidence="8">
    <location>
        <position position="19"/>
    </location>
</feature>
<feature type="modified residue" description="N6-glutaryllysine; alternate" evidence="8">
    <location>
        <position position="19"/>
    </location>
</feature>
<feature type="modified residue" description="N6-lactoyllysine; alternate" evidence="8">
    <location>
        <position position="19"/>
    </location>
</feature>
<feature type="modified residue" description="N6-methyllysine; alternate" evidence="8">
    <location>
        <position position="19"/>
    </location>
</feature>
<feature type="modified residue" description="N6-(2-hydroxyisobutyryl)lysine; alternate" evidence="2">
    <location>
        <position position="24"/>
    </location>
</feature>
<feature type="modified residue" description="N6-acetyllysine; alternate" evidence="8">
    <location>
        <position position="24"/>
    </location>
</feature>
<feature type="modified residue" description="N6-butyryllysine; alternate" evidence="3">
    <location>
        <position position="24"/>
    </location>
</feature>
<feature type="modified residue" description="N6-crotonyllysine; alternate" evidence="8">
    <location>
        <position position="24"/>
    </location>
</feature>
<feature type="modified residue" description="N6-glutaryllysine; alternate" evidence="8">
    <location>
        <position position="24"/>
    </location>
</feature>
<feature type="modified residue" description="N6-lactoyllysine; alternate" evidence="8">
    <location>
        <position position="24"/>
    </location>
</feature>
<feature type="modified residue" description="N6-methyllysine; alternate" evidence="8">
    <location>
        <position position="24"/>
    </location>
</feature>
<feature type="modified residue" description="Citrulline" evidence="8">
    <location>
        <position position="27"/>
    </location>
</feature>
<feature type="modified residue" description="N6,N6,N6-trimethyllysine; alternate" evidence="8">
    <location>
        <position position="28"/>
    </location>
</feature>
<feature type="modified residue" description="N6,N6-dimethyllysine; alternate" evidence="8">
    <location>
        <position position="28"/>
    </location>
</feature>
<feature type="modified residue" description="N6-(2-hydroxyisobutyryl)lysine; alternate" evidence="2">
    <location>
        <position position="28"/>
    </location>
</feature>
<feature type="modified residue" description="N6-acetyllysine; alternate" evidence="8">
    <location>
        <position position="28"/>
    </location>
</feature>
<feature type="modified residue" description="N6-crotonyllysine; alternate" evidence="8">
    <location>
        <position position="28"/>
    </location>
</feature>
<feature type="modified residue" description="N6-glutaryllysine; alternate" evidence="8">
    <location>
        <position position="28"/>
    </location>
</feature>
<feature type="modified residue" description="N6-lactoyllysine; alternate" evidence="8">
    <location>
        <position position="28"/>
    </location>
</feature>
<feature type="modified residue" description="N6-methyllysine; alternate" evidence="8">
    <location>
        <position position="28"/>
    </location>
</feature>
<feature type="modified residue" description="ADP-ribosylserine; alternate" evidence="2">
    <location>
        <position position="29"/>
    </location>
</feature>
<feature type="modified residue" description="Phosphoserine; alternate; by AURKB, AURKC and RPS6KA5" evidence="8">
    <location>
        <position position="29"/>
    </location>
</feature>
<feature type="modified residue" description="N6,N6,N6-trimethyllysine; alternate" evidence="8">
    <location>
        <position position="37"/>
    </location>
</feature>
<feature type="modified residue" description="N6,N6-dimethyllysine; alternate" evidence="8">
    <location>
        <position position="37"/>
    </location>
</feature>
<feature type="modified residue" description="N6-(2-hydroxyisobutyryl)lysine; alternate" evidence="2">
    <location>
        <position position="37"/>
    </location>
</feature>
<feature type="modified residue" description="N6-acetyllysine; alternate" evidence="8">
    <location>
        <position position="37"/>
    </location>
</feature>
<feature type="modified residue" description="N6-methyllysine; alternate" evidence="8">
    <location>
        <position position="37"/>
    </location>
</feature>
<feature type="modified residue" description="N6-methyllysine" evidence="2">
    <location>
        <position position="38"/>
    </location>
</feature>
<feature type="modified residue" description="Phosphotyrosine" evidence="8">
    <location>
        <position position="42"/>
    </location>
</feature>
<feature type="modified residue" description="N6,N6,N6-trimethyllysine; alternate" evidence="8">
    <location>
        <position position="57"/>
    </location>
</feature>
<feature type="modified residue" description="N6-(2-hydroxyisobutyryl)lysine; alternate" evidence="2">
    <location>
        <position position="57"/>
    </location>
</feature>
<feature type="modified residue" description="N6-acetyllysine; alternate" evidence="8">
    <location>
        <position position="57"/>
    </location>
</feature>
<feature type="modified residue" description="N6-crotonyllysine; alternate" evidence="8">
    <location>
        <position position="57"/>
    </location>
</feature>
<feature type="modified residue" description="N6-glutaryllysine; alternate" evidence="8">
    <location>
        <position position="57"/>
    </location>
</feature>
<feature type="modified residue" description="N6-lactoyllysine; alternate" evidence="5">
    <location>
        <position position="57"/>
    </location>
</feature>
<feature type="modified residue" description="N6-methyllysine; by EHMT2; alternate" evidence="8">
    <location>
        <position position="57"/>
    </location>
</feature>
<feature type="modified residue" description="N6-succinyllysine; alternate" evidence="5">
    <location>
        <position position="57"/>
    </location>
</feature>
<feature type="modified residue" description="Phosphoserine" evidence="8">
    <location>
        <position position="58"/>
    </location>
</feature>
<feature type="modified residue" description="N6-(2-hydroxyisobutyryl)lysine; alternate" evidence="2">
    <location>
        <position position="65"/>
    </location>
</feature>
<feature type="modified residue" description="N6-methyllysine; alternate" evidence="8">
    <location>
        <position position="65"/>
    </location>
</feature>
<feature type="modified residue" description="N6,N6,N6-trimethyllysine; alternate" evidence="5">
    <location>
        <position position="80"/>
    </location>
</feature>
<feature type="modified residue" description="N6,N6-dimethyllysine; alternate" evidence="8">
    <location>
        <position position="80"/>
    </location>
</feature>
<feature type="modified residue" description="N6-(2-hydroxyisobutyryl)lysine; alternate" evidence="2">
    <location>
        <position position="80"/>
    </location>
</feature>
<feature type="modified residue" description="N6-acetyllysine; alternate" evidence="8">
    <location>
        <position position="80"/>
    </location>
</feature>
<feature type="modified residue" description="N6-glutaryllysine; alternate" evidence="8">
    <location>
        <position position="80"/>
    </location>
</feature>
<feature type="modified residue" description="N6-lactoyllysine; alternate" evidence="8">
    <location>
        <position position="80"/>
    </location>
</feature>
<feature type="modified residue" description="N6-methyllysine; alternate" evidence="8">
    <location>
        <position position="80"/>
    </location>
</feature>
<feature type="modified residue" description="N6-succinyllysine; alternate" evidence="5">
    <location>
        <position position="80"/>
    </location>
</feature>
<feature type="modified residue" description="Phosphothreonine" evidence="8">
    <location>
        <position position="81"/>
    </location>
</feature>
<feature type="modified residue" description="Phosphoserine" evidence="6">
    <location>
        <position position="87"/>
    </location>
</feature>
<feature type="modified residue" description="Phosphothreonine" evidence="8">
    <location>
        <position position="108"/>
    </location>
</feature>
<feature type="modified residue" description="N6-acetyllysine; alternate" evidence="8">
    <location>
        <position position="116"/>
    </location>
</feature>
<feature type="modified residue" description="N6-glutaryllysine; alternate" evidence="8">
    <location>
        <position position="116"/>
    </location>
</feature>
<feature type="modified residue" description="N6-(2-hydroxyisobutyryl)lysine; alternate" evidence="2">
    <location>
        <position position="123"/>
    </location>
</feature>
<feature type="modified residue" description="N6-acetyllysine; alternate" evidence="8">
    <location>
        <position position="123"/>
    </location>
</feature>
<feature type="modified residue" description="N6-glutaryllysine; alternate" evidence="8">
    <location>
        <position position="123"/>
    </location>
</feature>
<feature type="modified residue" description="N6-methyllysine; alternate" evidence="8">
    <location>
        <position position="123"/>
    </location>
</feature>
<feature type="modified residue" description="N6-succinyllysine; alternate" evidence="8">
    <location>
        <position position="123"/>
    </location>
</feature>
<feature type="lipid moiety-binding region" description="S-palmitoyl cysteine" evidence="8">
    <location>
        <position position="111"/>
    </location>
</feature>
<gene>
    <name type="ORF">TGas081o10.1</name>
    <name type="ORF">TNeu057j11.1</name>
</gene>
<dbReference type="EMBL" id="CR760429">
    <property type="protein sequence ID" value="CAJ82338.1"/>
    <property type="molecule type" value="mRNA"/>
</dbReference>
<dbReference type="EMBL" id="CR855729">
    <property type="protein sequence ID" value="CAJ82528.1"/>
    <property type="molecule type" value="mRNA"/>
</dbReference>
<dbReference type="RefSeq" id="XP_002943524.1">
    <property type="nucleotide sequence ID" value="XM_002943478.3"/>
</dbReference>
<dbReference type="RefSeq" id="XP_004913911.1">
    <property type="nucleotide sequence ID" value="XM_004913854.3"/>
</dbReference>
<dbReference type="RefSeq" id="XP_004919181.1">
    <property type="nucleotide sequence ID" value="XM_004919124.3"/>
</dbReference>
<dbReference type="RefSeq" id="XP_012809130.1">
    <property type="nucleotide sequence ID" value="XM_012953676.2"/>
</dbReference>
<dbReference type="RefSeq" id="XP_012809131.1">
    <property type="nucleotide sequence ID" value="XM_012953677.2"/>
</dbReference>
<dbReference type="RefSeq" id="XP_012809329.1">
    <property type="nucleotide sequence ID" value="XM_012953875.2"/>
</dbReference>
<dbReference type="RefSeq" id="XP_012817495.1">
    <property type="nucleotide sequence ID" value="XM_012962041.2"/>
</dbReference>
<dbReference type="RefSeq" id="XP_012817500.1">
    <property type="nucleotide sequence ID" value="XM_012962046.2"/>
</dbReference>
<dbReference type="RefSeq" id="XP_012817501.1">
    <property type="nucleotide sequence ID" value="XM_012962047.2"/>
</dbReference>
<dbReference type="RefSeq" id="XP_017948262.1">
    <property type="nucleotide sequence ID" value="XM_018092773.1"/>
</dbReference>
<dbReference type="RefSeq" id="XP_017952905.1">
    <property type="nucleotide sequence ID" value="XM_018097416.1"/>
</dbReference>
<dbReference type="SMR" id="Q28D37"/>
<dbReference type="FunCoup" id="Q28D37">
    <property type="interactions" value="924"/>
</dbReference>
<dbReference type="STRING" id="8364.ENSXETP00000000174"/>
<dbReference type="PaxDb" id="8364-ENSXETP00000057894"/>
<dbReference type="KEGG" id="xtr:100486720"/>
<dbReference type="KEGG" id="xtr:100487179"/>
<dbReference type="KEGG" id="xtr:100487756"/>
<dbReference type="KEGG" id="xtr:100492367"/>
<dbReference type="KEGG" id="xtr:100493036"/>
<dbReference type="KEGG" id="xtr:100493041"/>
<dbReference type="KEGG" id="xtr:100493100"/>
<dbReference type="KEGG" id="xtr:100495338"/>
<dbReference type="KEGG" id="xtr:100495788"/>
<dbReference type="KEGG" id="xtr:100496129"/>
<dbReference type="KEGG" id="xtr:100497127"/>
<dbReference type="KEGG" id="xtr:101730986"/>
<dbReference type="KEGG" id="xtr:101731074"/>
<dbReference type="KEGG" id="xtr:108646286"/>
<dbReference type="KEGG" id="xtr:108646287"/>
<dbReference type="KEGG" id="xtr:108648869"/>
<dbReference type="KEGG" id="xtr:549390"/>
<dbReference type="CTD" id="126961"/>
<dbReference type="CTD" id="653604"/>
<dbReference type="eggNOG" id="KOG1745">
    <property type="taxonomic scope" value="Eukaryota"/>
</dbReference>
<dbReference type="HOGENOM" id="CLU_078295_4_0_1"/>
<dbReference type="InParanoid" id="Q28D37"/>
<dbReference type="OMA" id="ANDCAIH"/>
<dbReference type="OrthoDB" id="9891818at2759"/>
<dbReference type="PhylomeDB" id="Q28D37"/>
<dbReference type="TreeFam" id="TF314241"/>
<dbReference type="Proteomes" id="UP000008143">
    <property type="component" value="Chromosome 3"/>
</dbReference>
<dbReference type="Proteomes" id="UP000008143">
    <property type="component" value="Chromosome 6"/>
</dbReference>
<dbReference type="Proteomes" id="UP000008143">
    <property type="component" value="Chromosome 9"/>
</dbReference>
<dbReference type="ExpressionAtlas" id="Q28D37">
    <property type="expression patterns" value="baseline"/>
</dbReference>
<dbReference type="GO" id="GO:0000786">
    <property type="term" value="C:nucleosome"/>
    <property type="evidence" value="ECO:0007669"/>
    <property type="project" value="UniProtKB-KW"/>
</dbReference>
<dbReference type="GO" id="GO:0005634">
    <property type="term" value="C:nucleus"/>
    <property type="evidence" value="ECO:0007669"/>
    <property type="project" value="UniProtKB-SubCell"/>
</dbReference>
<dbReference type="GO" id="GO:0003677">
    <property type="term" value="F:DNA binding"/>
    <property type="evidence" value="ECO:0007669"/>
    <property type="project" value="UniProtKB-KW"/>
</dbReference>
<dbReference type="GO" id="GO:0046982">
    <property type="term" value="F:protein heterodimerization activity"/>
    <property type="evidence" value="ECO:0007669"/>
    <property type="project" value="InterPro"/>
</dbReference>
<dbReference type="GO" id="GO:0030527">
    <property type="term" value="F:structural constituent of chromatin"/>
    <property type="evidence" value="ECO:0007669"/>
    <property type="project" value="InterPro"/>
</dbReference>
<dbReference type="CDD" id="cd22911">
    <property type="entry name" value="HFD_H3"/>
    <property type="match status" value="1"/>
</dbReference>
<dbReference type="FunFam" id="1.10.20.10:FF:000078">
    <property type="entry name" value="Histone H3"/>
    <property type="match status" value="1"/>
</dbReference>
<dbReference type="FunFam" id="1.10.20.10:FF:000044">
    <property type="entry name" value="Histone H3.3"/>
    <property type="match status" value="1"/>
</dbReference>
<dbReference type="Gene3D" id="1.10.20.10">
    <property type="entry name" value="Histone, subunit A"/>
    <property type="match status" value="1"/>
</dbReference>
<dbReference type="InterPro" id="IPR009072">
    <property type="entry name" value="Histone-fold"/>
</dbReference>
<dbReference type="InterPro" id="IPR007125">
    <property type="entry name" value="Histone_H2A/H2B/H3"/>
</dbReference>
<dbReference type="InterPro" id="IPR000164">
    <property type="entry name" value="Histone_H3/CENP-A"/>
</dbReference>
<dbReference type="PANTHER" id="PTHR11426">
    <property type="entry name" value="HISTONE H3"/>
    <property type="match status" value="1"/>
</dbReference>
<dbReference type="Pfam" id="PF00125">
    <property type="entry name" value="Histone"/>
    <property type="match status" value="1"/>
</dbReference>
<dbReference type="PRINTS" id="PR00622">
    <property type="entry name" value="HISTONEH3"/>
</dbReference>
<dbReference type="SMART" id="SM00428">
    <property type="entry name" value="H3"/>
    <property type="match status" value="1"/>
</dbReference>
<dbReference type="SUPFAM" id="SSF47113">
    <property type="entry name" value="Histone-fold"/>
    <property type="match status" value="1"/>
</dbReference>
<dbReference type="PROSITE" id="PS00322">
    <property type="entry name" value="HISTONE_H3_1"/>
    <property type="match status" value="1"/>
</dbReference>
<dbReference type="PROSITE" id="PS00959">
    <property type="entry name" value="HISTONE_H3_2"/>
    <property type="match status" value="1"/>
</dbReference>
<comment type="function">
    <text>Core component of nucleosome. Nucleosomes wrap and compact DNA into chromatin, limiting DNA accessibility to the cellular machineries which require DNA as a template. Histones thereby play a central role in transcription regulation, DNA repair, DNA replication and chromosomal stability. DNA accessibility is regulated via a complex set of post-translational modifications of histones, also called histone code, and nucleosome remodeling.</text>
</comment>
<comment type="subunit">
    <text>The nucleosome is a histone octamer containing two molecules each of H2A, H2B, H3 and H4 assembled in one H3-H4 heterotetramer and two H2A-H2B heterodimers. The octamer wraps approximately 147 bp of DNA.</text>
</comment>
<comment type="subcellular location">
    <subcellularLocation>
        <location>Nucleus</location>
    </subcellularLocation>
    <subcellularLocation>
        <location>Chromosome</location>
    </subcellularLocation>
</comment>
<comment type="developmental stage">
    <text>Expressed during S phase, then expression strongly decreases as cell division slows down during the process of differentiation.</text>
</comment>
<comment type="PTM">
    <text evidence="8">Acetylation is generally linked to gene activation. Acetylation on Lys-19 (H3K18ac) and Lys-24 (H3K24ac) favors methylation at Arg-18 (H3R17me). Acetylation at Lys-123 (H3K122ac) by EP300/p300 plays a central role in chromatin structure: localizes at the surface of the histone octamer and stimulates transcription, possibly by promoting nucleosome instability (By similarity).</text>
</comment>
<comment type="PTM">
    <text evidence="8">Asymmetric dimethylation at Arg-18 (H3R17me2a) is linked to gene activation. Asymmetric dimethylation at Arg-3 (H3R2me2a) by prmt6 is linked to gene repression and is mutually exclusive with H3 Lys-5 methylation (H3K4me2 and H3K4me3). H3R2me2a is present at the 3' of genes regardless of their transcription state and is enriched on inactive promoters, while it is absent on active promoters (By similarity).</text>
</comment>
<comment type="PTM">
    <text evidence="8">Methylation at Lys-5 (H3K4me), Lys-37 (H3K36me) and Lys-80 (H3K79me) are linked to gene activation. Methylation at Lys-5 (H3K4me) facilitates subsequent acetylation of H3 and H4. Methylation at Lys-80 (H3K79me) is associated with DNA double-strand break (DSB) responses and is a specific target for tp53bp1. Methylation at Lys-10 (H3K9me) and Lys-28 (H3K27me) are linked to gene repression. Methylation at Lys-10 (H3K9me) is a specific target for HP1 proteins (cbx1, cbx3 and cbx5) and prevents subsequent phosphorylation at Ser-11 (H3S10ph) and acetylation of H3 and H4. Methylation at Lys-5 (H3K4me) and Lys-80 (H3K79me) require preliminary monoubiquitination of H2B at 'Lys-120' (By similarity).</text>
</comment>
<comment type="PTM">
    <text evidence="8">Phosphorylated at Thr-4 (H3T3ph) by VRK1 (By similarity). Phosphorylated at Thr-4 (H3T3ph) by HASPIN during prophase and dephosphorylated during anaphase. Phosphorylation at Ser-11 (H3S10ph) by aurkb is crucial for chromosome condensation and cell-cycle progression during mitosis and meiosis. In addition phosphorylation at Ser-11 (H3S10ph) by rps6ka4 and rps6ka5 is important during interphase because it enables the transcription of genes following external stimulation, like mitogens, stress, growth factors or UV irradiation and result in the activation of genes, such as c-fos and c-jun. Phosphorylation at Ser-11 (H3S10ph), which is linked to gene activation, prevents methylation at Lys-10 (H3K9me) but facilitates acetylation of H3 and H4. Phosphorylation at Ser-11 (H3S10ph) by aurkb mediates the dissociation of HP1 proteins (cbx1, cbx3 and cbx5) from heterochromatin. Phosphorylation at Ser-11 (H3S10ph) is also an essential regulatory mechanism for neoplastic cell transformation. Phosphorylated at Ser-29 (H3S28ph) by map3k20 isoform 1, rps6ka5 or aurkb during mitosis or upon ultraviolet B irradiation. Phosphorylation at Thr-7 (H3T6ph) by prkcb is a specific tag for epigenetic transcriptional activation that prevents demethylation of Lys-5 (H3K4me) by lsd1/kdm1a. At centromeres, specifically phosphorylated at Thr-12 (H3T11ph) from prophase to early anaphase, by DAPK3 and PKN1. Phosphorylation at Thr-12 (H3T11ph) by PKN1 or isoform M2 of PKM (PKM2) is a specific tag for epigenetic transcriptional activation that promotes demethylation of Lys-10 (H3K9me) by kdm4c/jmjd2c. Phosphorylation at Tyr-42 (H3Y41ph) by jak2 promotes exclusion of cbx5 (HP1 alpha) from chromatin (By similarity).</text>
</comment>
<comment type="PTM">
    <text evidence="8">Monoubiquitinated by rag1 in lymphoid cells, monoubiquitination is required for V(D)J recombination.</text>
</comment>
<comment type="PTM">
    <text evidence="8">Lysine deamination at Lys-5 (H3K4all) to form allysine only takes place on H3K4me3 and results in gene repression.</text>
</comment>
<comment type="PTM">
    <text evidence="3">Butyrylation of histones marks active promoters and competes with histone acetylation. It is present during late spermatogenesis.</text>
</comment>
<comment type="PTM">
    <text evidence="8">Succinylation at Lys-80 (H3K79succ) by KAT2A takes place with a maximum frequency around the transcription start sites of genes. It gives a specific tag for epigenetic transcription activation. Desuccinylation at Lys-123 (H3K122succ) by SIRT7 in response to DNA damage promotes chromatin condensation and double-strand breaks (DSBs) repair.</text>
</comment>
<comment type="PTM">
    <text evidence="2">Serine ADP-ribosylation by PARP1 or PARP2 constitutes the primary form of ADP-ribosylation of proteins in response to DNA damage. Serine ADP-ribosylation at Ser-11 (H3S10ADPr) promotes recruitment of CHD1L. H3S10ADPr is mutually exclusive with phosphorylation at Ser-11 (H3S10ph) and impairs acetylation at Lys-10 (H3K9ac).</text>
</comment>
<comment type="PTM">
    <text evidence="8">Serotonylated by TGM2 at Gln-6 (H3Q5ser) during serotonergic neuron differentiation (By similarity). H3Q5ser is associated with trimethylation of Lys-5 (H3K4me3) and enhances general transcription factor IID (TFIID) complex-binding to H3K4me3, thereby facilitating transcription (By similarity).</text>
</comment>
<comment type="PTM">
    <text evidence="7 8">Dopaminylated by TGM2 at Gln-6 (H3Q5dop) in ventral tegmental area (VTA) neurons (By similarity). H3Q5dop mediates neurotransmission-independent role of nuclear dopamine by regulating relapse-related transcriptional plasticity in the reward system (By similarity).</text>
</comment>
<comment type="PTM">
    <text evidence="8">Lactylated in macrophages by EP300/P300 by using lactoyl-CoA directly derived from endogenous or exogenous lactate, leading to stimulates gene transcription.</text>
</comment>
<comment type="similarity">
    <text evidence="10">Belongs to the histone H3 family.</text>
</comment>
<accession>Q28D37</accession>
<protein>
    <recommendedName>
        <fullName>Histone H3.2</fullName>
    </recommendedName>
</protein>
<keyword id="KW-0007">Acetylation</keyword>
<keyword id="KW-0013">ADP-ribosylation</keyword>
<keyword id="KW-0158">Chromosome</keyword>
<keyword id="KW-0164">Citrullination</keyword>
<keyword id="KW-0238">DNA-binding</keyword>
<keyword id="KW-0379">Hydroxylation</keyword>
<keyword id="KW-0449">Lipoprotein</keyword>
<keyword id="KW-0488">Methylation</keyword>
<keyword id="KW-0544">Nucleosome core</keyword>
<keyword id="KW-0539">Nucleus</keyword>
<keyword id="KW-0564">Palmitate</keyword>
<keyword id="KW-0597">Phosphoprotein</keyword>
<keyword id="KW-1185">Reference proteome</keyword>
<keyword id="KW-0832">Ubl conjugation</keyword>
<evidence type="ECO:0000250" key="1"/>
<evidence type="ECO:0000250" key="2">
    <source>
        <dbReference type="UniProtKB" id="P68431"/>
    </source>
</evidence>
<evidence type="ECO:0000250" key="3">
    <source>
        <dbReference type="UniProtKB" id="P68433"/>
    </source>
</evidence>
<evidence type="ECO:0000250" key="4">
    <source>
        <dbReference type="UniProtKB" id="P84227"/>
    </source>
</evidence>
<evidence type="ECO:0000250" key="5">
    <source>
        <dbReference type="UniProtKB" id="P84228"/>
    </source>
</evidence>
<evidence type="ECO:0000250" key="6">
    <source>
        <dbReference type="UniProtKB" id="P84243"/>
    </source>
</evidence>
<evidence type="ECO:0000250" key="7">
    <source>
        <dbReference type="UniProtKB" id="P84245"/>
    </source>
</evidence>
<evidence type="ECO:0000250" key="8">
    <source>
        <dbReference type="UniProtKB" id="Q71DI3"/>
    </source>
</evidence>
<evidence type="ECO:0000256" key="9">
    <source>
        <dbReference type="SAM" id="MobiDB-lite"/>
    </source>
</evidence>
<evidence type="ECO:0000305" key="10"/>
<reference key="1">
    <citation type="submission" date="2006-03" db="EMBL/GenBank/DDBJ databases">
        <authorList>
            <consortium name="Sanger Xenopus tropicalis EST/cDNA project"/>
        </authorList>
    </citation>
    <scope>NUCLEOTIDE SEQUENCE [LARGE SCALE MRNA]</scope>
    <source>
        <tissue>Gastrula</tissue>
        <tissue>Neurula</tissue>
    </source>
</reference>
<name>H32_XENTR</name>
<sequence>MARTKQTARKSTGGKAPRKQLATKAARKSAPATGGVKKPHRYRPGTVALREIRRYQKSTELLIRKLPFQRLVREIAQDFKTDLRFQSSAVMALQEASEAYLVGLFEDTNLCAIHAKRVTIMPKDIQLARRIRGERA</sequence>
<proteinExistence type="evidence at transcript level"/>